<protein>
    <recommendedName>
        <fullName evidence="1">Large ribosomal subunit protein uL4</fullName>
    </recommendedName>
    <alternativeName>
        <fullName evidence="3">50S ribosomal protein L4</fullName>
    </alternativeName>
</protein>
<name>RL4_SALPC</name>
<feature type="chain" id="PRO_1000166022" description="Large ribosomal subunit protein uL4">
    <location>
        <begin position="1"/>
        <end position="201"/>
    </location>
</feature>
<feature type="region of interest" description="Disordered" evidence="2">
    <location>
        <begin position="44"/>
        <end position="71"/>
    </location>
</feature>
<keyword id="KW-0687">Ribonucleoprotein</keyword>
<keyword id="KW-0689">Ribosomal protein</keyword>
<keyword id="KW-0694">RNA-binding</keyword>
<keyword id="KW-0699">rRNA-binding</keyword>
<proteinExistence type="inferred from homology"/>
<accession>C0Q0B5</accession>
<gene>
    <name evidence="1" type="primary">rplD</name>
    <name type="ordered locus">SPC_3508</name>
</gene>
<reference key="1">
    <citation type="journal article" date="2009" name="PLoS ONE">
        <title>Salmonella paratyphi C: genetic divergence from Salmonella choleraesuis and pathogenic convergence with Salmonella typhi.</title>
        <authorList>
            <person name="Liu W.-Q."/>
            <person name="Feng Y."/>
            <person name="Wang Y."/>
            <person name="Zou Q.-H."/>
            <person name="Chen F."/>
            <person name="Guo J.-T."/>
            <person name="Peng Y.-H."/>
            <person name="Jin Y."/>
            <person name="Li Y.-G."/>
            <person name="Hu S.-N."/>
            <person name="Johnston R.N."/>
            <person name="Liu G.-R."/>
            <person name="Liu S.-L."/>
        </authorList>
    </citation>
    <scope>NUCLEOTIDE SEQUENCE [LARGE SCALE GENOMIC DNA]</scope>
    <source>
        <strain>RKS4594</strain>
    </source>
</reference>
<evidence type="ECO:0000255" key="1">
    <source>
        <dbReference type="HAMAP-Rule" id="MF_01328"/>
    </source>
</evidence>
<evidence type="ECO:0000256" key="2">
    <source>
        <dbReference type="SAM" id="MobiDB-lite"/>
    </source>
</evidence>
<evidence type="ECO:0000305" key="3"/>
<organism>
    <name type="scientific">Salmonella paratyphi C (strain RKS4594)</name>
    <dbReference type="NCBI Taxonomy" id="476213"/>
    <lineage>
        <taxon>Bacteria</taxon>
        <taxon>Pseudomonadati</taxon>
        <taxon>Pseudomonadota</taxon>
        <taxon>Gammaproteobacteria</taxon>
        <taxon>Enterobacterales</taxon>
        <taxon>Enterobacteriaceae</taxon>
        <taxon>Salmonella</taxon>
    </lineage>
</organism>
<comment type="function">
    <text evidence="1">One of the primary rRNA binding proteins, this protein initially binds near the 5'-end of the 23S rRNA. It is important during the early stages of 50S assembly. It makes multiple contacts with different domains of the 23S rRNA in the assembled 50S subunit and ribosome.</text>
</comment>
<comment type="function">
    <text evidence="1">Forms part of the polypeptide exit tunnel.</text>
</comment>
<comment type="subunit">
    <text evidence="1">Part of the 50S ribosomal subunit.</text>
</comment>
<comment type="similarity">
    <text evidence="1">Belongs to the universal ribosomal protein uL4 family.</text>
</comment>
<dbReference type="EMBL" id="CP000857">
    <property type="protein sequence ID" value="ACN47592.1"/>
    <property type="molecule type" value="Genomic_DNA"/>
</dbReference>
<dbReference type="RefSeq" id="WP_000424395.1">
    <property type="nucleotide sequence ID" value="NC_012125.1"/>
</dbReference>
<dbReference type="SMR" id="C0Q0B5"/>
<dbReference type="GeneID" id="97442859"/>
<dbReference type="KEGG" id="sei:SPC_3508"/>
<dbReference type="HOGENOM" id="CLU_041575_5_2_6"/>
<dbReference type="Proteomes" id="UP000001599">
    <property type="component" value="Chromosome"/>
</dbReference>
<dbReference type="GO" id="GO:1990904">
    <property type="term" value="C:ribonucleoprotein complex"/>
    <property type="evidence" value="ECO:0007669"/>
    <property type="project" value="UniProtKB-KW"/>
</dbReference>
<dbReference type="GO" id="GO:0005840">
    <property type="term" value="C:ribosome"/>
    <property type="evidence" value="ECO:0007669"/>
    <property type="project" value="UniProtKB-KW"/>
</dbReference>
<dbReference type="GO" id="GO:0019843">
    <property type="term" value="F:rRNA binding"/>
    <property type="evidence" value="ECO:0007669"/>
    <property type="project" value="UniProtKB-UniRule"/>
</dbReference>
<dbReference type="GO" id="GO:0003735">
    <property type="term" value="F:structural constituent of ribosome"/>
    <property type="evidence" value="ECO:0007669"/>
    <property type="project" value="InterPro"/>
</dbReference>
<dbReference type="GO" id="GO:0006412">
    <property type="term" value="P:translation"/>
    <property type="evidence" value="ECO:0007669"/>
    <property type="project" value="UniProtKB-UniRule"/>
</dbReference>
<dbReference type="FunFam" id="3.40.1370.10:FF:000001">
    <property type="entry name" value="50S ribosomal protein L4"/>
    <property type="match status" value="1"/>
</dbReference>
<dbReference type="Gene3D" id="3.40.1370.10">
    <property type="match status" value="1"/>
</dbReference>
<dbReference type="HAMAP" id="MF_01328_B">
    <property type="entry name" value="Ribosomal_uL4_B"/>
    <property type="match status" value="1"/>
</dbReference>
<dbReference type="InterPro" id="IPR002136">
    <property type="entry name" value="Ribosomal_uL4"/>
</dbReference>
<dbReference type="InterPro" id="IPR013005">
    <property type="entry name" value="Ribosomal_uL4-like"/>
</dbReference>
<dbReference type="InterPro" id="IPR023574">
    <property type="entry name" value="Ribosomal_uL4_dom_sf"/>
</dbReference>
<dbReference type="NCBIfam" id="TIGR03953">
    <property type="entry name" value="rplD_bact"/>
    <property type="match status" value="1"/>
</dbReference>
<dbReference type="PANTHER" id="PTHR10746">
    <property type="entry name" value="50S RIBOSOMAL PROTEIN L4"/>
    <property type="match status" value="1"/>
</dbReference>
<dbReference type="PANTHER" id="PTHR10746:SF6">
    <property type="entry name" value="LARGE RIBOSOMAL SUBUNIT PROTEIN UL4M"/>
    <property type="match status" value="1"/>
</dbReference>
<dbReference type="Pfam" id="PF00573">
    <property type="entry name" value="Ribosomal_L4"/>
    <property type="match status" value="1"/>
</dbReference>
<dbReference type="SUPFAM" id="SSF52166">
    <property type="entry name" value="Ribosomal protein L4"/>
    <property type="match status" value="1"/>
</dbReference>
<sequence length="201" mass="22087">MELVLKDAQSALTVSETTFGRDFNEALVHQVVVAYAAGARQGTRAQKTRAEVTGSGKKPWRQKGTGRARSGSIKSPIWRSGGVTFAARPQDHSQKVNKKMYRGALKSILSELVRQDRLIVVEKFSVEAPKTKLLAQKLKDMALEDVLIITGELDENLFLAARNLHKVDVRDATGIDPVSLIAFDKVVMTADAVKQVEEMLA</sequence>